<evidence type="ECO:0000250" key="1"/>
<evidence type="ECO:0000255" key="2"/>
<evidence type="ECO:0000305" key="3"/>
<proteinExistence type="evidence at transcript level"/>
<sequence length="770" mass="85539">MDLEAAHGAAAAPGKRRRRARESWGASLLLAYQSLGVVYGDVATSPLYVYKSAFAGDDIQHSAGNEEIYGVLSFVFWTLTLISLVKYVLIVLRADDGGEGGTFALYSLICRHVRAGLLPGGAGDELAVGGRRDARAMSRLRAMLERYRVLQRLLLLFALLGTCMVIGDGVLTPAVSVYSAVSGLELSMEHEHHKYVQLPVTCAILIGLFALQHYGTHRVGFIFAPIVCVWLLCISAIGVYNIVHWNHHVYRALSPYYMYQFLKKTQTGGWMSLGGILLCVTGSEAMYADLGHFSQSSIKIAFMSVVYPALVLAYMGQAAYISQHHSFENAYHIGFYVSVPEKLRWPVLVIAILAAVVGSQAVITGTFSIIKQCSSLSCFPGVKIVHTSSTVHGQIYIPEINWILMILCLAVTLGFRNTKHLANAQGLAVITVMLVTTCLMSLVIVLCWNKSIFLALGFLIFFGTIEVLYFSASLVKFHEGAWVPITLSFIFMIVMCVWHYGTIKKYEFDFQNKVSVNWLLNLGPSLGIVRVRGIGLIHTELVSGIPAIFSHFVTNLPAFHQVLVFLCVKSVPVPHVQPEERFLVGRIGPKEYRLYRVIVRYGYRDVQKDDIEFEKDLVSSIAEFIRSGDSHHNGVLEDTDKSCEKLSSISNGIPLWMEDGEVDASASPHKETDTQIISPNRKKARFVLPKNAQVDSEVRRELQELMDAREAGMSFILGHSYMKAKSGSSFIKRIVINFFYEFLRRNSRGPSYAATIPHASTLEVGMVYQV</sequence>
<organism>
    <name type="scientific">Oryza sativa subsp. japonica</name>
    <name type="common">Rice</name>
    <dbReference type="NCBI Taxonomy" id="39947"/>
    <lineage>
        <taxon>Eukaryota</taxon>
        <taxon>Viridiplantae</taxon>
        <taxon>Streptophyta</taxon>
        <taxon>Embryophyta</taxon>
        <taxon>Tracheophyta</taxon>
        <taxon>Spermatophyta</taxon>
        <taxon>Magnoliopsida</taxon>
        <taxon>Liliopsida</taxon>
        <taxon>Poales</taxon>
        <taxon>Poaceae</taxon>
        <taxon>BOP clade</taxon>
        <taxon>Oryzoideae</taxon>
        <taxon>Oryzeae</taxon>
        <taxon>Oryzinae</taxon>
        <taxon>Oryza</taxon>
        <taxon>Oryza sativa</taxon>
    </lineage>
</organism>
<feature type="chain" id="PRO_0000379540" description="Potassium transporter 25">
    <location>
        <begin position="1"/>
        <end position="770"/>
    </location>
</feature>
<feature type="topological domain" description="Cytoplasmic" evidence="2">
    <location>
        <begin position="1"/>
        <end position="23"/>
    </location>
</feature>
<feature type="transmembrane region" description="Helical; Name=1" evidence="2">
    <location>
        <begin position="24"/>
        <end position="44"/>
    </location>
</feature>
<feature type="topological domain" description="Extracellular" evidence="2">
    <location>
        <begin position="45"/>
        <end position="70"/>
    </location>
</feature>
<feature type="transmembrane region" description="Helical; Name=2" evidence="2">
    <location>
        <begin position="71"/>
        <end position="91"/>
    </location>
</feature>
<feature type="topological domain" description="Cytoplasmic" evidence="2">
    <location>
        <begin position="92"/>
        <end position="152"/>
    </location>
</feature>
<feature type="transmembrane region" description="Helical; Name=3" evidence="2">
    <location>
        <begin position="153"/>
        <end position="173"/>
    </location>
</feature>
<feature type="topological domain" description="Extracellular" evidence="2">
    <location>
        <begin position="174"/>
        <end position="194"/>
    </location>
</feature>
<feature type="transmembrane region" description="Helical; Name=4" evidence="2">
    <location>
        <begin position="195"/>
        <end position="215"/>
    </location>
</feature>
<feature type="topological domain" description="Cytoplasmic" evidence="2">
    <location>
        <begin position="216"/>
        <end position="218"/>
    </location>
</feature>
<feature type="transmembrane region" description="Helical; Name=5" evidence="2">
    <location>
        <begin position="219"/>
        <end position="239"/>
    </location>
</feature>
<feature type="topological domain" description="Extracellular" evidence="2">
    <location>
        <begin position="240"/>
        <end position="267"/>
    </location>
</feature>
<feature type="transmembrane region" description="Helical; Name=6" evidence="2">
    <location>
        <begin position="268"/>
        <end position="288"/>
    </location>
</feature>
<feature type="topological domain" description="Cytoplasmic" evidence="2">
    <location>
        <begin position="289"/>
        <end position="299"/>
    </location>
</feature>
<feature type="transmembrane region" description="Helical; Name=7" evidence="2">
    <location>
        <begin position="300"/>
        <end position="320"/>
    </location>
</feature>
<feature type="topological domain" description="Extracellular" evidence="2">
    <location>
        <begin position="321"/>
        <end position="346"/>
    </location>
</feature>
<feature type="transmembrane region" description="Helical; Name=8" evidence="2">
    <location>
        <begin position="347"/>
        <end position="367"/>
    </location>
</feature>
<feature type="topological domain" description="Cytoplasmic" evidence="2">
    <location>
        <begin position="368"/>
        <end position="394"/>
    </location>
</feature>
<feature type="transmembrane region" description="Helical; Name=9" evidence="2">
    <location>
        <begin position="395"/>
        <end position="415"/>
    </location>
</feature>
<feature type="topological domain" description="Extracellular" evidence="2">
    <location>
        <begin position="416"/>
        <end position="425"/>
    </location>
</feature>
<feature type="transmembrane region" description="Helical; Name=10" evidence="2">
    <location>
        <begin position="426"/>
        <end position="446"/>
    </location>
</feature>
<feature type="topological domain" description="Cytoplasmic" evidence="2">
    <location>
        <begin position="447"/>
        <end position="451"/>
    </location>
</feature>
<feature type="transmembrane region" description="Helical; Name=11" evidence="2">
    <location>
        <begin position="452"/>
        <end position="472"/>
    </location>
</feature>
<feature type="topological domain" description="Extracellular" evidence="2">
    <location>
        <begin position="473"/>
        <end position="479"/>
    </location>
</feature>
<feature type="transmembrane region" description="Helical; Name=12" evidence="2">
    <location>
        <begin position="480"/>
        <end position="500"/>
    </location>
</feature>
<feature type="topological domain" description="Cytoplasmic" evidence="2">
    <location>
        <begin position="501"/>
        <end position="770"/>
    </location>
</feature>
<dbReference type="EMBL" id="AP004888">
    <property type="protein sequence ID" value="BAD15925.1"/>
    <property type="molecule type" value="Genomic_DNA"/>
</dbReference>
<dbReference type="EMBL" id="AP005751">
    <property type="protein sequence ID" value="BAD16364.1"/>
    <property type="molecule type" value="Genomic_DNA"/>
</dbReference>
<dbReference type="EMBL" id="AP008208">
    <property type="protein sequence ID" value="BAF09926.1"/>
    <property type="molecule type" value="Genomic_DNA"/>
</dbReference>
<dbReference type="EMBL" id="AP014958">
    <property type="protein sequence ID" value="BAS80740.1"/>
    <property type="molecule type" value="Genomic_DNA"/>
</dbReference>
<dbReference type="EMBL" id="AK111629">
    <property type="protein sequence ID" value="BAG99342.1"/>
    <property type="molecule type" value="mRNA"/>
</dbReference>
<dbReference type="RefSeq" id="XP_015625454.1">
    <property type="nucleotide sequence ID" value="XM_015769968.1"/>
</dbReference>
<dbReference type="RefSeq" id="XP_015625455.1">
    <property type="nucleotide sequence ID" value="XM_015769969.1"/>
</dbReference>
<dbReference type="FunCoup" id="Q6YWQ4">
    <property type="interactions" value="26"/>
</dbReference>
<dbReference type="STRING" id="39947.Q6YWQ4"/>
<dbReference type="PaxDb" id="39947-Q6YWQ4"/>
<dbReference type="EnsemblPlants" id="Os02t0730300-01">
    <property type="protein sequence ID" value="Os02t0730300-01"/>
    <property type="gene ID" value="Os02g0730300"/>
</dbReference>
<dbReference type="GeneID" id="4330614"/>
<dbReference type="Gramene" id="Os02t0730300-01">
    <property type="protein sequence ID" value="Os02t0730300-01"/>
    <property type="gene ID" value="Os02g0730300"/>
</dbReference>
<dbReference type="KEGG" id="dosa:Os02g0730300"/>
<dbReference type="KEGG" id="osa:4330614"/>
<dbReference type="eggNOG" id="ENOG502QPSA">
    <property type="taxonomic scope" value="Eukaryota"/>
</dbReference>
<dbReference type="HOGENOM" id="CLU_008142_2_0_1"/>
<dbReference type="InParanoid" id="Q6YWQ4"/>
<dbReference type="OMA" id="MEHEHHK"/>
<dbReference type="OrthoDB" id="504708at2759"/>
<dbReference type="Proteomes" id="UP000000763">
    <property type="component" value="Chromosome 2"/>
</dbReference>
<dbReference type="Proteomes" id="UP000059680">
    <property type="component" value="Chromosome 2"/>
</dbReference>
<dbReference type="ExpressionAtlas" id="Q6YWQ4">
    <property type="expression patterns" value="baseline and differential"/>
</dbReference>
<dbReference type="GO" id="GO:0016020">
    <property type="term" value="C:membrane"/>
    <property type="evidence" value="ECO:0000318"/>
    <property type="project" value="GO_Central"/>
</dbReference>
<dbReference type="GO" id="GO:0015079">
    <property type="term" value="F:potassium ion transmembrane transporter activity"/>
    <property type="evidence" value="ECO:0000318"/>
    <property type="project" value="GO_Central"/>
</dbReference>
<dbReference type="GO" id="GO:0006813">
    <property type="term" value="P:potassium ion transport"/>
    <property type="evidence" value="ECO:0000318"/>
    <property type="project" value="GO_Central"/>
</dbReference>
<dbReference type="InterPro" id="IPR003855">
    <property type="entry name" value="K+_transporter"/>
</dbReference>
<dbReference type="InterPro" id="IPR053952">
    <property type="entry name" value="K_trans_C"/>
</dbReference>
<dbReference type="InterPro" id="IPR053951">
    <property type="entry name" value="K_trans_N"/>
</dbReference>
<dbReference type="NCBIfam" id="TIGR00794">
    <property type="entry name" value="kup"/>
    <property type="match status" value="1"/>
</dbReference>
<dbReference type="PANTHER" id="PTHR30540">
    <property type="entry name" value="OSMOTIC STRESS POTASSIUM TRANSPORTER"/>
    <property type="match status" value="1"/>
</dbReference>
<dbReference type="PANTHER" id="PTHR30540:SF103">
    <property type="entry name" value="POTASSIUM TRANSPORTER 25"/>
    <property type="match status" value="1"/>
</dbReference>
<dbReference type="Pfam" id="PF02705">
    <property type="entry name" value="K_trans"/>
    <property type="match status" value="1"/>
</dbReference>
<dbReference type="Pfam" id="PF22776">
    <property type="entry name" value="K_trans_C"/>
    <property type="match status" value="1"/>
</dbReference>
<gene>
    <name type="primary">HAK25</name>
    <name type="ordered locus">Os02g0730300</name>
    <name type="ordered locus">LOC_Os02g49760</name>
    <name type="ORF">OSJNBa0072H09.37</name>
    <name type="ORF">P0617A09.16</name>
</gene>
<keyword id="KW-0406">Ion transport</keyword>
<keyword id="KW-0472">Membrane</keyword>
<keyword id="KW-0630">Potassium</keyword>
<keyword id="KW-0633">Potassium transport</keyword>
<keyword id="KW-1185">Reference proteome</keyword>
<keyword id="KW-0812">Transmembrane</keyword>
<keyword id="KW-1133">Transmembrane helix</keyword>
<keyword id="KW-0813">Transport</keyword>
<comment type="function">
    <text evidence="1">High-affinity potassium transporter.</text>
</comment>
<comment type="subcellular location">
    <subcellularLocation>
        <location evidence="3">Membrane</location>
        <topology evidence="3">Multi-pass membrane protein</topology>
    </subcellularLocation>
</comment>
<comment type="similarity">
    <text evidence="3">Belongs to the HAK/KUP transporter (TC 2.A.72.3) family.</text>
</comment>
<protein>
    <recommendedName>
        <fullName>Potassium transporter 25</fullName>
    </recommendedName>
    <alternativeName>
        <fullName>OsHAK25</fullName>
    </alternativeName>
</protein>
<reference key="1">
    <citation type="journal article" date="2005" name="Nature">
        <title>The map-based sequence of the rice genome.</title>
        <authorList>
            <consortium name="International rice genome sequencing project (IRGSP)"/>
        </authorList>
    </citation>
    <scope>NUCLEOTIDE SEQUENCE [LARGE SCALE GENOMIC DNA]</scope>
    <source>
        <strain>cv. Nipponbare</strain>
    </source>
</reference>
<reference key="2">
    <citation type="journal article" date="2008" name="Nucleic Acids Res.">
        <title>The rice annotation project database (RAP-DB): 2008 update.</title>
        <authorList>
            <consortium name="The rice annotation project (RAP)"/>
        </authorList>
    </citation>
    <scope>GENOME REANNOTATION</scope>
    <source>
        <strain>cv. Nipponbare</strain>
    </source>
</reference>
<reference key="3">
    <citation type="journal article" date="2013" name="Rice">
        <title>Improvement of the Oryza sativa Nipponbare reference genome using next generation sequence and optical map data.</title>
        <authorList>
            <person name="Kawahara Y."/>
            <person name="de la Bastide M."/>
            <person name="Hamilton J.P."/>
            <person name="Kanamori H."/>
            <person name="McCombie W.R."/>
            <person name="Ouyang S."/>
            <person name="Schwartz D.C."/>
            <person name="Tanaka T."/>
            <person name="Wu J."/>
            <person name="Zhou S."/>
            <person name="Childs K.L."/>
            <person name="Davidson R.M."/>
            <person name="Lin H."/>
            <person name="Quesada-Ocampo L."/>
            <person name="Vaillancourt B."/>
            <person name="Sakai H."/>
            <person name="Lee S.S."/>
            <person name="Kim J."/>
            <person name="Numa H."/>
            <person name="Itoh T."/>
            <person name="Buell C.R."/>
            <person name="Matsumoto T."/>
        </authorList>
    </citation>
    <scope>GENOME REANNOTATION</scope>
    <source>
        <strain>cv. Nipponbare</strain>
    </source>
</reference>
<reference key="4">
    <citation type="journal article" date="2003" name="Science">
        <title>Collection, mapping, and annotation of over 28,000 cDNA clones from japonica rice.</title>
        <authorList>
            <consortium name="The rice full-length cDNA consortium"/>
        </authorList>
    </citation>
    <scope>NUCLEOTIDE SEQUENCE [LARGE SCALE MRNA]</scope>
    <source>
        <strain>cv. Nipponbare</strain>
    </source>
</reference>
<reference key="5">
    <citation type="journal article" date="2009" name="J. Genet. Genomics">
        <title>Molecular evolution and functional divergence of HAK potassium transporter gene family in rice (Oryza sativa L.).</title>
        <authorList>
            <person name="Yang Z."/>
            <person name="Gao Q."/>
            <person name="Sun C."/>
            <person name="Li W."/>
            <person name="Gu S."/>
            <person name="Xu C."/>
        </authorList>
    </citation>
    <scope>GENE FAMILY</scope>
</reference>
<name>HAK25_ORYSJ</name>
<accession>Q6YWQ4</accession>
<accession>A0A0P0VP06</accession>